<keyword id="KW-0378">Hydrolase</keyword>
<keyword id="KW-0441">Lipid A biosynthesis</keyword>
<keyword id="KW-0444">Lipid biosynthesis</keyword>
<keyword id="KW-0443">Lipid metabolism</keyword>
<keyword id="KW-0479">Metal-binding</keyword>
<keyword id="KW-0862">Zinc</keyword>
<feature type="chain" id="PRO_0000191949" description="UDP-3-O-acyl-N-acetylglucosamine deacetylase">
    <location>
        <begin position="1"/>
        <end position="288"/>
    </location>
</feature>
<feature type="active site" description="Proton donor" evidence="1">
    <location>
        <position position="263"/>
    </location>
</feature>
<feature type="binding site" evidence="1">
    <location>
        <position position="79"/>
    </location>
    <ligand>
        <name>Zn(2+)</name>
        <dbReference type="ChEBI" id="CHEBI:29105"/>
    </ligand>
</feature>
<feature type="binding site" evidence="1">
    <location>
        <position position="236"/>
    </location>
    <ligand>
        <name>Zn(2+)</name>
        <dbReference type="ChEBI" id="CHEBI:29105"/>
    </ligand>
</feature>
<feature type="binding site" evidence="1">
    <location>
        <position position="240"/>
    </location>
    <ligand>
        <name>Zn(2+)</name>
        <dbReference type="ChEBI" id="CHEBI:29105"/>
    </ligand>
</feature>
<dbReference type="EC" id="3.5.1.108" evidence="1"/>
<dbReference type="EMBL" id="AE006914">
    <property type="protein sequence ID" value="AAL02877.1"/>
    <property type="status" value="ALT_INIT"/>
    <property type="molecule type" value="Genomic_DNA"/>
</dbReference>
<dbReference type="PIR" id="C97742">
    <property type="entry name" value="C97742"/>
</dbReference>
<dbReference type="RefSeq" id="WP_029374439.1">
    <property type="nucleotide sequence ID" value="NC_003103.1"/>
</dbReference>
<dbReference type="SMR" id="Q92IT1"/>
<dbReference type="GeneID" id="928540"/>
<dbReference type="KEGG" id="rco:RC0339"/>
<dbReference type="PATRIC" id="fig|272944.4.peg.388"/>
<dbReference type="HOGENOM" id="CLU_046528_1_1_5"/>
<dbReference type="UniPathway" id="UPA00359">
    <property type="reaction ID" value="UER00478"/>
</dbReference>
<dbReference type="Proteomes" id="UP000000816">
    <property type="component" value="Chromosome"/>
</dbReference>
<dbReference type="GO" id="GO:0016020">
    <property type="term" value="C:membrane"/>
    <property type="evidence" value="ECO:0007669"/>
    <property type="project" value="GOC"/>
</dbReference>
<dbReference type="GO" id="GO:0046872">
    <property type="term" value="F:metal ion binding"/>
    <property type="evidence" value="ECO:0007669"/>
    <property type="project" value="UniProtKB-KW"/>
</dbReference>
<dbReference type="GO" id="GO:0103117">
    <property type="term" value="F:UDP-3-O-acyl-N-acetylglucosamine deacetylase activity"/>
    <property type="evidence" value="ECO:0007669"/>
    <property type="project" value="UniProtKB-UniRule"/>
</dbReference>
<dbReference type="GO" id="GO:0009245">
    <property type="term" value="P:lipid A biosynthetic process"/>
    <property type="evidence" value="ECO:0007669"/>
    <property type="project" value="UniProtKB-UniRule"/>
</dbReference>
<dbReference type="Gene3D" id="3.30.230.20">
    <property type="entry name" value="lpxc deacetylase, domain 1"/>
    <property type="match status" value="1"/>
</dbReference>
<dbReference type="Gene3D" id="3.30.1700.10">
    <property type="entry name" value="lpxc deacetylase, domain 2"/>
    <property type="match status" value="1"/>
</dbReference>
<dbReference type="HAMAP" id="MF_00388">
    <property type="entry name" value="LpxC"/>
    <property type="match status" value="1"/>
</dbReference>
<dbReference type="InterPro" id="IPR020568">
    <property type="entry name" value="Ribosomal_Su5_D2-typ_SF"/>
</dbReference>
<dbReference type="InterPro" id="IPR004463">
    <property type="entry name" value="UDP-acyl_GlcNac_deAcase"/>
</dbReference>
<dbReference type="InterPro" id="IPR011334">
    <property type="entry name" value="UDP-acyl_GlcNac_deAcase_C"/>
</dbReference>
<dbReference type="InterPro" id="IPR015870">
    <property type="entry name" value="UDP-acyl_N-AcGlcN_deAcase_N"/>
</dbReference>
<dbReference type="NCBIfam" id="TIGR00325">
    <property type="entry name" value="lpxC"/>
    <property type="match status" value="1"/>
</dbReference>
<dbReference type="PANTHER" id="PTHR33694">
    <property type="entry name" value="UDP-3-O-ACYL-N-ACETYLGLUCOSAMINE DEACETYLASE 1, MITOCHONDRIAL-RELATED"/>
    <property type="match status" value="1"/>
</dbReference>
<dbReference type="PANTHER" id="PTHR33694:SF1">
    <property type="entry name" value="UDP-3-O-ACYL-N-ACETYLGLUCOSAMINE DEACETYLASE 1, MITOCHONDRIAL-RELATED"/>
    <property type="match status" value="1"/>
</dbReference>
<dbReference type="Pfam" id="PF03331">
    <property type="entry name" value="LpxC"/>
    <property type="match status" value="1"/>
</dbReference>
<dbReference type="SUPFAM" id="SSF54211">
    <property type="entry name" value="Ribosomal protein S5 domain 2-like"/>
    <property type="match status" value="2"/>
</dbReference>
<evidence type="ECO:0000255" key="1">
    <source>
        <dbReference type="HAMAP-Rule" id="MF_00388"/>
    </source>
</evidence>
<evidence type="ECO:0000305" key="2"/>
<accession>Q92IT1</accession>
<organism>
    <name type="scientific">Rickettsia conorii (strain ATCC VR-613 / Malish 7)</name>
    <dbReference type="NCBI Taxonomy" id="272944"/>
    <lineage>
        <taxon>Bacteria</taxon>
        <taxon>Pseudomonadati</taxon>
        <taxon>Pseudomonadota</taxon>
        <taxon>Alphaproteobacteria</taxon>
        <taxon>Rickettsiales</taxon>
        <taxon>Rickettsiaceae</taxon>
        <taxon>Rickettsieae</taxon>
        <taxon>Rickettsia</taxon>
        <taxon>spotted fever group</taxon>
    </lineage>
</organism>
<comment type="function">
    <text evidence="1">Catalyzes the hydrolysis of UDP-3-O-myristoyl-N-acetylglucosamine to form UDP-3-O-myristoylglucosamine and acetate, the committed step in lipid A biosynthesis.</text>
</comment>
<comment type="catalytic activity">
    <reaction evidence="1">
        <text>a UDP-3-O-[(3R)-3-hydroxyacyl]-N-acetyl-alpha-D-glucosamine + H2O = a UDP-3-O-[(3R)-3-hydroxyacyl]-alpha-D-glucosamine + acetate</text>
        <dbReference type="Rhea" id="RHEA:67816"/>
        <dbReference type="ChEBI" id="CHEBI:15377"/>
        <dbReference type="ChEBI" id="CHEBI:30089"/>
        <dbReference type="ChEBI" id="CHEBI:137740"/>
        <dbReference type="ChEBI" id="CHEBI:173225"/>
        <dbReference type="EC" id="3.5.1.108"/>
    </reaction>
</comment>
<comment type="cofactor">
    <cofactor evidence="1">
        <name>Zn(2+)</name>
        <dbReference type="ChEBI" id="CHEBI:29105"/>
    </cofactor>
</comment>
<comment type="pathway">
    <text evidence="1">Glycolipid biosynthesis; lipid IV(A) biosynthesis; lipid IV(A) from (3R)-3-hydroxytetradecanoyl-[acyl-carrier-protein] and UDP-N-acetyl-alpha-D-glucosamine: step 2/6.</text>
</comment>
<comment type="similarity">
    <text evidence="1">Belongs to the LpxC family.</text>
</comment>
<comment type="sequence caution" evidence="2">
    <conflict type="erroneous initiation">
        <sequence resource="EMBL-CDS" id="AAL02877"/>
    </conflict>
</comment>
<protein>
    <recommendedName>
        <fullName evidence="1">UDP-3-O-acyl-N-acetylglucosamine deacetylase</fullName>
        <shortName evidence="1">UDP-3-O-acyl-GlcNAc deacetylase</shortName>
        <ecNumber evidence="1">3.5.1.108</ecNumber>
    </recommendedName>
    <alternativeName>
        <fullName evidence="1">UDP-3-O-[R-3-hydroxymyristoyl]-N-acetylglucosamine deacetylase</fullName>
    </alternativeName>
</protein>
<proteinExistence type="inferred from homology"/>
<reference key="1">
    <citation type="journal article" date="2001" name="Science">
        <title>Mechanisms of evolution in Rickettsia conorii and R. prowazekii.</title>
        <authorList>
            <person name="Ogata H."/>
            <person name="Audic S."/>
            <person name="Renesto-Audiffren P."/>
            <person name="Fournier P.-E."/>
            <person name="Barbe V."/>
            <person name="Samson D."/>
            <person name="Roux V."/>
            <person name="Cossart P."/>
            <person name="Weissenbach J."/>
            <person name="Claverie J.-M."/>
            <person name="Raoult D."/>
        </authorList>
    </citation>
    <scope>NUCLEOTIDE SEQUENCE [LARGE SCALE GENOMIC DNA]</scope>
    <source>
        <strain>ATCC VR-613 / Malish 7</strain>
    </source>
</reference>
<gene>
    <name evidence="1" type="primary">lpxC</name>
    <name type="ordered locus">RC0339</name>
</gene>
<sequence>MQQSTLLKPVSCYGIGVHSGKRTQLTIEPTKENTGIIFIRTDISSENNYIEASYFNVSDTLLSTTISNDHKVQISTIEHLMAALWGCSIDNAIIKIDGPEVPIMDGSSKPFVFMIECAGKKLQNAPKKYLKILKDIKVVHKDCELYCTPSDHMTVDLTIDFSSKAIGRQNLSFRDQESFTKNIADARTFGFIRDVDYLKSKGLAQGASFENAIGIDEQDKILNPNGLRYEDEFVRHKLLDLFGDLYTNGTSIVSAIKGYKTSHALNNELLHRIFSDTTSYKFVTSSEL</sequence>
<name>LPXC_RICCN</name>